<name>ENO_THEP3</name>
<dbReference type="EC" id="4.2.1.11" evidence="1"/>
<dbReference type="EMBL" id="CP000924">
    <property type="protein sequence ID" value="ABY94395.1"/>
    <property type="molecule type" value="Genomic_DNA"/>
</dbReference>
<dbReference type="RefSeq" id="WP_012269155.1">
    <property type="nucleotide sequence ID" value="NC_010321.1"/>
</dbReference>
<dbReference type="SMR" id="B0K882"/>
<dbReference type="STRING" id="340099.Teth39_0735"/>
<dbReference type="KEGG" id="tpd:Teth39_0735"/>
<dbReference type="eggNOG" id="COG0148">
    <property type="taxonomic scope" value="Bacteria"/>
</dbReference>
<dbReference type="HOGENOM" id="CLU_031223_2_1_9"/>
<dbReference type="UniPathway" id="UPA00109">
    <property type="reaction ID" value="UER00187"/>
</dbReference>
<dbReference type="Proteomes" id="UP000002156">
    <property type="component" value="Chromosome"/>
</dbReference>
<dbReference type="GO" id="GO:0009986">
    <property type="term" value="C:cell surface"/>
    <property type="evidence" value="ECO:0007669"/>
    <property type="project" value="UniProtKB-SubCell"/>
</dbReference>
<dbReference type="GO" id="GO:0005576">
    <property type="term" value="C:extracellular region"/>
    <property type="evidence" value="ECO:0007669"/>
    <property type="project" value="UniProtKB-SubCell"/>
</dbReference>
<dbReference type="GO" id="GO:0000015">
    <property type="term" value="C:phosphopyruvate hydratase complex"/>
    <property type="evidence" value="ECO:0007669"/>
    <property type="project" value="InterPro"/>
</dbReference>
<dbReference type="GO" id="GO:0000287">
    <property type="term" value="F:magnesium ion binding"/>
    <property type="evidence" value="ECO:0007669"/>
    <property type="project" value="UniProtKB-UniRule"/>
</dbReference>
<dbReference type="GO" id="GO:0004634">
    <property type="term" value="F:phosphopyruvate hydratase activity"/>
    <property type="evidence" value="ECO:0007669"/>
    <property type="project" value="UniProtKB-UniRule"/>
</dbReference>
<dbReference type="GO" id="GO:0006096">
    <property type="term" value="P:glycolytic process"/>
    <property type="evidence" value="ECO:0007669"/>
    <property type="project" value="UniProtKB-UniRule"/>
</dbReference>
<dbReference type="CDD" id="cd03313">
    <property type="entry name" value="enolase"/>
    <property type="match status" value="1"/>
</dbReference>
<dbReference type="FunFam" id="3.20.20.120:FF:000001">
    <property type="entry name" value="Enolase"/>
    <property type="match status" value="1"/>
</dbReference>
<dbReference type="FunFam" id="3.30.390.10:FF:000001">
    <property type="entry name" value="Enolase"/>
    <property type="match status" value="1"/>
</dbReference>
<dbReference type="Gene3D" id="3.20.20.120">
    <property type="entry name" value="Enolase-like C-terminal domain"/>
    <property type="match status" value="1"/>
</dbReference>
<dbReference type="Gene3D" id="3.30.390.10">
    <property type="entry name" value="Enolase-like, N-terminal domain"/>
    <property type="match status" value="1"/>
</dbReference>
<dbReference type="HAMAP" id="MF_00318">
    <property type="entry name" value="Enolase"/>
    <property type="match status" value="1"/>
</dbReference>
<dbReference type="InterPro" id="IPR000941">
    <property type="entry name" value="Enolase"/>
</dbReference>
<dbReference type="InterPro" id="IPR036849">
    <property type="entry name" value="Enolase-like_C_sf"/>
</dbReference>
<dbReference type="InterPro" id="IPR029017">
    <property type="entry name" value="Enolase-like_N"/>
</dbReference>
<dbReference type="InterPro" id="IPR020810">
    <property type="entry name" value="Enolase_C"/>
</dbReference>
<dbReference type="InterPro" id="IPR020809">
    <property type="entry name" value="Enolase_CS"/>
</dbReference>
<dbReference type="InterPro" id="IPR020811">
    <property type="entry name" value="Enolase_N"/>
</dbReference>
<dbReference type="NCBIfam" id="TIGR01060">
    <property type="entry name" value="eno"/>
    <property type="match status" value="1"/>
</dbReference>
<dbReference type="PANTHER" id="PTHR11902">
    <property type="entry name" value="ENOLASE"/>
    <property type="match status" value="1"/>
</dbReference>
<dbReference type="PANTHER" id="PTHR11902:SF1">
    <property type="entry name" value="ENOLASE"/>
    <property type="match status" value="1"/>
</dbReference>
<dbReference type="Pfam" id="PF00113">
    <property type="entry name" value="Enolase_C"/>
    <property type="match status" value="1"/>
</dbReference>
<dbReference type="Pfam" id="PF03952">
    <property type="entry name" value="Enolase_N"/>
    <property type="match status" value="1"/>
</dbReference>
<dbReference type="PIRSF" id="PIRSF001400">
    <property type="entry name" value="Enolase"/>
    <property type="match status" value="1"/>
</dbReference>
<dbReference type="PRINTS" id="PR00148">
    <property type="entry name" value="ENOLASE"/>
</dbReference>
<dbReference type="SFLD" id="SFLDF00002">
    <property type="entry name" value="enolase"/>
    <property type="match status" value="1"/>
</dbReference>
<dbReference type="SFLD" id="SFLDG00178">
    <property type="entry name" value="enolase"/>
    <property type="match status" value="1"/>
</dbReference>
<dbReference type="SMART" id="SM01192">
    <property type="entry name" value="Enolase_C"/>
    <property type="match status" value="1"/>
</dbReference>
<dbReference type="SMART" id="SM01193">
    <property type="entry name" value="Enolase_N"/>
    <property type="match status" value="1"/>
</dbReference>
<dbReference type="SUPFAM" id="SSF51604">
    <property type="entry name" value="Enolase C-terminal domain-like"/>
    <property type="match status" value="1"/>
</dbReference>
<dbReference type="SUPFAM" id="SSF54826">
    <property type="entry name" value="Enolase N-terminal domain-like"/>
    <property type="match status" value="1"/>
</dbReference>
<dbReference type="PROSITE" id="PS00164">
    <property type="entry name" value="ENOLASE"/>
    <property type="match status" value="1"/>
</dbReference>
<sequence length="429" mass="46237">MSSIIDIFAREILDSRGNPTVEVEVELDSGAVGRAAVPSGASTGAFEAVELRDGDKSRYLGKGVLKAVQNVNDIIAPELIGMEAQDQVAIDKAMIELDGTPNKSKLGANAILGVSLAVAKAAAEECGLPLYQYIGGVNAKTLPVPMMNILNGGKHADNNVDIQEFMIMPVGAPNFREALRMCSEVYHNLKNVLHSKGLSTTVGDEGGFAPNLTSNEEAIQVILEAIEKAGYVPGEDIVLALDPASTELYKEDGKYHFEGEGIVRTPEEMVDFWEQLVNKYPIVSIEDGLAEEDWNGWKLLTERLGKKIQLVGDDLFVTNTQRLSKGISMGVANSILIKLNQIGTLTETLDAIEMAKRAGYTAVVSHRSGETEDSTIADLVVGVNAGQIKTGAPARTDRVVKYNQLLRIEEALGSTAQYLGKNAFYNIKK</sequence>
<proteinExistence type="inferred from homology"/>
<feature type="chain" id="PRO_1000115926" description="Enolase">
    <location>
        <begin position="1"/>
        <end position="429"/>
    </location>
</feature>
<feature type="active site" description="Proton donor" evidence="1">
    <location>
        <position position="205"/>
    </location>
</feature>
<feature type="active site" description="Proton acceptor" evidence="1">
    <location>
        <position position="338"/>
    </location>
</feature>
<feature type="binding site" evidence="1">
    <location>
        <position position="163"/>
    </location>
    <ligand>
        <name>(2R)-2-phosphoglycerate</name>
        <dbReference type="ChEBI" id="CHEBI:58289"/>
    </ligand>
</feature>
<feature type="binding site" evidence="1">
    <location>
        <position position="242"/>
    </location>
    <ligand>
        <name>Mg(2+)</name>
        <dbReference type="ChEBI" id="CHEBI:18420"/>
    </ligand>
</feature>
<feature type="binding site" evidence="1">
    <location>
        <position position="286"/>
    </location>
    <ligand>
        <name>Mg(2+)</name>
        <dbReference type="ChEBI" id="CHEBI:18420"/>
    </ligand>
</feature>
<feature type="binding site" evidence="1">
    <location>
        <position position="313"/>
    </location>
    <ligand>
        <name>Mg(2+)</name>
        <dbReference type="ChEBI" id="CHEBI:18420"/>
    </ligand>
</feature>
<feature type="binding site" evidence="1">
    <location>
        <position position="338"/>
    </location>
    <ligand>
        <name>(2R)-2-phosphoglycerate</name>
        <dbReference type="ChEBI" id="CHEBI:58289"/>
    </ligand>
</feature>
<feature type="binding site" evidence="1">
    <location>
        <position position="367"/>
    </location>
    <ligand>
        <name>(2R)-2-phosphoglycerate</name>
        <dbReference type="ChEBI" id="CHEBI:58289"/>
    </ligand>
</feature>
<feature type="binding site" evidence="1">
    <location>
        <position position="368"/>
    </location>
    <ligand>
        <name>(2R)-2-phosphoglycerate</name>
        <dbReference type="ChEBI" id="CHEBI:58289"/>
    </ligand>
</feature>
<feature type="binding site" evidence="1">
    <location>
        <position position="389"/>
    </location>
    <ligand>
        <name>(2R)-2-phosphoglycerate</name>
        <dbReference type="ChEBI" id="CHEBI:58289"/>
    </ligand>
</feature>
<accession>B0K882</accession>
<keyword id="KW-0963">Cytoplasm</keyword>
<keyword id="KW-0324">Glycolysis</keyword>
<keyword id="KW-0456">Lyase</keyword>
<keyword id="KW-0460">Magnesium</keyword>
<keyword id="KW-0479">Metal-binding</keyword>
<keyword id="KW-1185">Reference proteome</keyword>
<keyword id="KW-0964">Secreted</keyword>
<evidence type="ECO:0000255" key="1">
    <source>
        <dbReference type="HAMAP-Rule" id="MF_00318"/>
    </source>
</evidence>
<gene>
    <name evidence="1" type="primary">eno</name>
    <name type="ordered locus">Teth39_0735</name>
</gene>
<organism>
    <name type="scientific">Thermoanaerobacter pseudethanolicus (strain ATCC 33223 / 39E)</name>
    <name type="common">Clostridium thermohydrosulfuricum</name>
    <dbReference type="NCBI Taxonomy" id="340099"/>
    <lineage>
        <taxon>Bacteria</taxon>
        <taxon>Bacillati</taxon>
        <taxon>Bacillota</taxon>
        <taxon>Clostridia</taxon>
        <taxon>Thermoanaerobacterales</taxon>
        <taxon>Thermoanaerobacteraceae</taxon>
        <taxon>Thermoanaerobacter</taxon>
    </lineage>
</organism>
<comment type="function">
    <text evidence="1">Catalyzes the reversible conversion of 2-phosphoglycerate (2-PG) into phosphoenolpyruvate (PEP). It is essential for the degradation of carbohydrates via glycolysis.</text>
</comment>
<comment type="catalytic activity">
    <reaction evidence="1">
        <text>(2R)-2-phosphoglycerate = phosphoenolpyruvate + H2O</text>
        <dbReference type="Rhea" id="RHEA:10164"/>
        <dbReference type="ChEBI" id="CHEBI:15377"/>
        <dbReference type="ChEBI" id="CHEBI:58289"/>
        <dbReference type="ChEBI" id="CHEBI:58702"/>
        <dbReference type="EC" id="4.2.1.11"/>
    </reaction>
</comment>
<comment type="cofactor">
    <cofactor evidence="1">
        <name>Mg(2+)</name>
        <dbReference type="ChEBI" id="CHEBI:18420"/>
    </cofactor>
    <text evidence="1">Binds a second Mg(2+) ion via substrate during catalysis.</text>
</comment>
<comment type="pathway">
    <text evidence="1">Carbohydrate degradation; glycolysis; pyruvate from D-glyceraldehyde 3-phosphate: step 4/5.</text>
</comment>
<comment type="subcellular location">
    <subcellularLocation>
        <location evidence="1">Cytoplasm</location>
    </subcellularLocation>
    <subcellularLocation>
        <location evidence="1">Secreted</location>
    </subcellularLocation>
    <subcellularLocation>
        <location evidence="1">Cell surface</location>
    </subcellularLocation>
    <text evidence="1">Fractions of enolase are present in both the cytoplasm and on the cell surface.</text>
</comment>
<comment type="similarity">
    <text evidence="1">Belongs to the enolase family.</text>
</comment>
<protein>
    <recommendedName>
        <fullName evidence="1">Enolase</fullName>
        <ecNumber evidence="1">4.2.1.11</ecNumber>
    </recommendedName>
    <alternativeName>
        <fullName evidence="1">2-phospho-D-glycerate hydro-lyase</fullName>
    </alternativeName>
    <alternativeName>
        <fullName evidence="1">2-phosphoglycerate dehydratase</fullName>
    </alternativeName>
</protein>
<reference key="1">
    <citation type="submission" date="2008-01" db="EMBL/GenBank/DDBJ databases">
        <title>Complete sequence of Thermoanaerobacter pseudethanolicus 39E.</title>
        <authorList>
            <person name="Copeland A."/>
            <person name="Lucas S."/>
            <person name="Lapidus A."/>
            <person name="Barry K."/>
            <person name="Glavina del Rio T."/>
            <person name="Dalin E."/>
            <person name="Tice H."/>
            <person name="Pitluck S."/>
            <person name="Bruce D."/>
            <person name="Goodwin L."/>
            <person name="Saunders E."/>
            <person name="Brettin T."/>
            <person name="Detter J.C."/>
            <person name="Han C."/>
            <person name="Schmutz J."/>
            <person name="Larimer F."/>
            <person name="Land M."/>
            <person name="Hauser L."/>
            <person name="Kyrpides N."/>
            <person name="Lykidis A."/>
            <person name="Hemme C."/>
            <person name="Fields M.W."/>
            <person name="He Z."/>
            <person name="Zhou J."/>
            <person name="Richardson P."/>
        </authorList>
    </citation>
    <scope>NUCLEOTIDE SEQUENCE [LARGE SCALE GENOMIC DNA]</scope>
    <source>
        <strain>ATCC 33223 / DSM 2355 / 39E</strain>
    </source>
</reference>